<name>IF2_STAEQ</name>
<protein>
    <recommendedName>
        <fullName evidence="2">Translation initiation factor IF-2</fullName>
    </recommendedName>
</protein>
<reference key="1">
    <citation type="journal article" date="2005" name="J. Bacteriol.">
        <title>Insights on evolution of virulence and resistance from the complete genome analysis of an early methicillin-resistant Staphylococcus aureus strain and a biofilm-producing methicillin-resistant Staphylococcus epidermidis strain.</title>
        <authorList>
            <person name="Gill S.R."/>
            <person name="Fouts D.E."/>
            <person name="Archer G.L."/>
            <person name="Mongodin E.F."/>
            <person name="DeBoy R.T."/>
            <person name="Ravel J."/>
            <person name="Paulsen I.T."/>
            <person name="Kolonay J.F."/>
            <person name="Brinkac L.M."/>
            <person name="Beanan M.J."/>
            <person name="Dodson R.J."/>
            <person name="Daugherty S.C."/>
            <person name="Madupu R."/>
            <person name="Angiuoli S.V."/>
            <person name="Durkin A.S."/>
            <person name="Haft D.H."/>
            <person name="Vamathevan J.J."/>
            <person name="Khouri H."/>
            <person name="Utterback T.R."/>
            <person name="Lee C."/>
            <person name="Dimitrov G."/>
            <person name="Jiang L."/>
            <person name="Qin H."/>
            <person name="Weidman J."/>
            <person name="Tran K."/>
            <person name="Kang K.H."/>
            <person name="Hance I.R."/>
            <person name="Nelson K.E."/>
            <person name="Fraser C.M."/>
        </authorList>
    </citation>
    <scope>NUCLEOTIDE SEQUENCE [LARGE SCALE GENOMIC DNA]</scope>
    <source>
        <strain>ATCC 35984 / DSM 28319 / BCRC 17069 / CCUG 31568 / BM 3577 / RP62A</strain>
    </source>
</reference>
<sequence length="720" mass="79343">MSKKRIYEYAKELNLKSKEIIDELKSMNVEVSNHMQALEEEQIKALDKKFKASQAKDTNKQNTQNNHQKSNNKQNSNDKEKQQSKNNSKPTKKKEQNNKGKQQNKNNKTNKNQKNNKNKKNNKNNKPQNEVEETKEMPSKITYQEGITVGELAEKLNVESAGIIKKLFLLGIMANINQSLDEETLELIADDYGVEIEKEVVVDEEDLSIYFDDETDDSDAIERPAVVTIMGHVDHGKTTLLDSIRNTKVTEGEAGGITQHIGAYQIENSGKKITFLDTPGHAAFTTMRARGAQVTDITILVVAADDGVMPQTIEAINHAKEAEVPTIVAVNKIDKPTANPDRVMQELTEYGLIPEDWGGDTIFVPLSALSGDGIDDLLEMIGLVAEVQELKANPNKQAVGTVIEAELDKSRGPAASLLVQNGTLNVGDAIVVGNTYGRIRAMVNDLGKRIKSAGPSTPVEITGINDVPLAGDRFVVFGDEKQARRIGEARHEASVIQQRQESKNVSLDNLFEQMKQGEMKDLNVIIKGDVQGSVEALAASLMKIDVEGVNVRIIHTAVGAINESDVTLANASNGIIIGFNVRPDAGAKRAAEAENVDMRLHRVIYNVIEEIESAMKGLLDPEFEEQVIGQAEVRQTFKVSKVGTIAGSYVTEGKITRNAGVRVIRDGIVLFEGELDTLKRFKDDAKEVAQGYECGITIEKYNDLKEGDIIEAFEMVEIQR</sequence>
<evidence type="ECO:0000250" key="1"/>
<evidence type="ECO:0000255" key="2">
    <source>
        <dbReference type="HAMAP-Rule" id="MF_00100"/>
    </source>
</evidence>
<evidence type="ECO:0000256" key="3">
    <source>
        <dbReference type="SAM" id="MobiDB-lite"/>
    </source>
</evidence>
<accession>Q5HPS2</accession>
<keyword id="KW-0963">Cytoplasm</keyword>
<keyword id="KW-0342">GTP-binding</keyword>
<keyword id="KW-0396">Initiation factor</keyword>
<keyword id="KW-0547">Nucleotide-binding</keyword>
<keyword id="KW-0648">Protein biosynthesis</keyword>
<keyword id="KW-1185">Reference proteome</keyword>
<organism>
    <name type="scientific">Staphylococcus epidermidis (strain ATCC 35984 / DSM 28319 / BCRC 17069 / CCUG 31568 / BM 3577 / RP62A)</name>
    <dbReference type="NCBI Taxonomy" id="176279"/>
    <lineage>
        <taxon>Bacteria</taxon>
        <taxon>Bacillati</taxon>
        <taxon>Bacillota</taxon>
        <taxon>Bacilli</taxon>
        <taxon>Bacillales</taxon>
        <taxon>Staphylococcaceae</taxon>
        <taxon>Staphylococcus</taxon>
    </lineage>
</organism>
<comment type="function">
    <text evidence="2">One of the essential components for the initiation of protein synthesis. Protects formylmethionyl-tRNA from spontaneous hydrolysis and promotes its binding to the 30S ribosomal subunits. Also involved in the hydrolysis of GTP during the formation of the 70S ribosomal complex.</text>
</comment>
<comment type="subcellular location">
    <subcellularLocation>
        <location evidence="2">Cytoplasm</location>
    </subcellularLocation>
</comment>
<comment type="similarity">
    <text evidence="2">Belongs to the TRAFAC class translation factor GTPase superfamily. Classic translation factor GTPase family. IF-2 subfamily.</text>
</comment>
<gene>
    <name evidence="2" type="primary">infB</name>
    <name type="ordered locus">SERP0836</name>
</gene>
<proteinExistence type="inferred from homology"/>
<dbReference type="EMBL" id="CP000029">
    <property type="protein sequence ID" value="AAW54205.1"/>
    <property type="molecule type" value="Genomic_DNA"/>
</dbReference>
<dbReference type="RefSeq" id="WP_002456223.1">
    <property type="nucleotide sequence ID" value="NC_002976.3"/>
</dbReference>
<dbReference type="SMR" id="Q5HPS2"/>
<dbReference type="STRING" id="176279.SERP0836"/>
<dbReference type="KEGG" id="ser:SERP0836"/>
<dbReference type="eggNOG" id="COG0532">
    <property type="taxonomic scope" value="Bacteria"/>
</dbReference>
<dbReference type="HOGENOM" id="CLU_006301_5_1_9"/>
<dbReference type="Proteomes" id="UP000000531">
    <property type="component" value="Chromosome"/>
</dbReference>
<dbReference type="GO" id="GO:0005829">
    <property type="term" value="C:cytosol"/>
    <property type="evidence" value="ECO:0007669"/>
    <property type="project" value="TreeGrafter"/>
</dbReference>
<dbReference type="GO" id="GO:0005525">
    <property type="term" value="F:GTP binding"/>
    <property type="evidence" value="ECO:0007669"/>
    <property type="project" value="UniProtKB-KW"/>
</dbReference>
<dbReference type="GO" id="GO:0003924">
    <property type="term" value="F:GTPase activity"/>
    <property type="evidence" value="ECO:0007669"/>
    <property type="project" value="UniProtKB-UniRule"/>
</dbReference>
<dbReference type="GO" id="GO:0003743">
    <property type="term" value="F:translation initiation factor activity"/>
    <property type="evidence" value="ECO:0007669"/>
    <property type="project" value="UniProtKB-UniRule"/>
</dbReference>
<dbReference type="CDD" id="cd01887">
    <property type="entry name" value="IF2_eIF5B"/>
    <property type="match status" value="1"/>
</dbReference>
<dbReference type="CDD" id="cd03702">
    <property type="entry name" value="IF2_mtIF2_II"/>
    <property type="match status" value="1"/>
</dbReference>
<dbReference type="CDD" id="cd03692">
    <property type="entry name" value="mtIF2_IVc"/>
    <property type="match status" value="1"/>
</dbReference>
<dbReference type="FunFam" id="2.40.30.10:FF:000007">
    <property type="entry name" value="Translation initiation factor IF-2"/>
    <property type="match status" value="1"/>
</dbReference>
<dbReference type="FunFam" id="2.40.30.10:FF:000008">
    <property type="entry name" value="Translation initiation factor IF-2"/>
    <property type="match status" value="1"/>
</dbReference>
<dbReference type="FunFam" id="3.40.50.10050:FF:000001">
    <property type="entry name" value="Translation initiation factor IF-2"/>
    <property type="match status" value="1"/>
</dbReference>
<dbReference type="FunFam" id="3.40.50.300:FF:000019">
    <property type="entry name" value="Translation initiation factor IF-2"/>
    <property type="match status" value="1"/>
</dbReference>
<dbReference type="Gene3D" id="1.10.10.2480">
    <property type="match status" value="1"/>
</dbReference>
<dbReference type="Gene3D" id="3.40.50.300">
    <property type="entry name" value="P-loop containing nucleotide triphosphate hydrolases"/>
    <property type="match status" value="1"/>
</dbReference>
<dbReference type="Gene3D" id="2.40.30.10">
    <property type="entry name" value="Translation factors"/>
    <property type="match status" value="2"/>
</dbReference>
<dbReference type="Gene3D" id="3.40.50.10050">
    <property type="entry name" value="Translation initiation factor IF- 2, domain 3"/>
    <property type="match status" value="1"/>
</dbReference>
<dbReference type="HAMAP" id="MF_00100_B">
    <property type="entry name" value="IF_2_B"/>
    <property type="match status" value="1"/>
</dbReference>
<dbReference type="InterPro" id="IPR053905">
    <property type="entry name" value="EF-G-like_DII"/>
</dbReference>
<dbReference type="InterPro" id="IPR044145">
    <property type="entry name" value="IF2_II"/>
</dbReference>
<dbReference type="InterPro" id="IPR006847">
    <property type="entry name" value="IF2_N"/>
</dbReference>
<dbReference type="InterPro" id="IPR027417">
    <property type="entry name" value="P-loop_NTPase"/>
</dbReference>
<dbReference type="InterPro" id="IPR005225">
    <property type="entry name" value="Small_GTP-bd"/>
</dbReference>
<dbReference type="InterPro" id="IPR000795">
    <property type="entry name" value="T_Tr_GTP-bd_dom"/>
</dbReference>
<dbReference type="InterPro" id="IPR000178">
    <property type="entry name" value="TF_IF2_bacterial-like"/>
</dbReference>
<dbReference type="InterPro" id="IPR015760">
    <property type="entry name" value="TIF_IF2"/>
</dbReference>
<dbReference type="InterPro" id="IPR023115">
    <property type="entry name" value="TIF_IF2_dom3"/>
</dbReference>
<dbReference type="InterPro" id="IPR036925">
    <property type="entry name" value="TIF_IF2_dom3_sf"/>
</dbReference>
<dbReference type="InterPro" id="IPR009000">
    <property type="entry name" value="Transl_B-barrel_sf"/>
</dbReference>
<dbReference type="NCBIfam" id="TIGR00487">
    <property type="entry name" value="IF-2"/>
    <property type="match status" value="1"/>
</dbReference>
<dbReference type="NCBIfam" id="TIGR00231">
    <property type="entry name" value="small_GTP"/>
    <property type="match status" value="1"/>
</dbReference>
<dbReference type="PANTHER" id="PTHR43381:SF5">
    <property type="entry name" value="TR-TYPE G DOMAIN-CONTAINING PROTEIN"/>
    <property type="match status" value="1"/>
</dbReference>
<dbReference type="PANTHER" id="PTHR43381">
    <property type="entry name" value="TRANSLATION INITIATION FACTOR IF-2-RELATED"/>
    <property type="match status" value="1"/>
</dbReference>
<dbReference type="Pfam" id="PF22042">
    <property type="entry name" value="EF-G_D2"/>
    <property type="match status" value="1"/>
</dbReference>
<dbReference type="Pfam" id="PF00009">
    <property type="entry name" value="GTP_EFTU"/>
    <property type="match status" value="1"/>
</dbReference>
<dbReference type="Pfam" id="PF11987">
    <property type="entry name" value="IF-2"/>
    <property type="match status" value="1"/>
</dbReference>
<dbReference type="Pfam" id="PF04760">
    <property type="entry name" value="IF2_N"/>
    <property type="match status" value="2"/>
</dbReference>
<dbReference type="SUPFAM" id="SSF52156">
    <property type="entry name" value="Initiation factor IF2/eIF5b, domain 3"/>
    <property type="match status" value="1"/>
</dbReference>
<dbReference type="SUPFAM" id="SSF52540">
    <property type="entry name" value="P-loop containing nucleoside triphosphate hydrolases"/>
    <property type="match status" value="1"/>
</dbReference>
<dbReference type="SUPFAM" id="SSF50447">
    <property type="entry name" value="Translation proteins"/>
    <property type="match status" value="2"/>
</dbReference>
<dbReference type="PROSITE" id="PS51722">
    <property type="entry name" value="G_TR_2"/>
    <property type="match status" value="1"/>
</dbReference>
<dbReference type="PROSITE" id="PS01176">
    <property type="entry name" value="IF2"/>
    <property type="match status" value="1"/>
</dbReference>
<feature type="chain" id="PRO_0000137255" description="Translation initiation factor IF-2">
    <location>
        <begin position="1"/>
        <end position="720"/>
    </location>
</feature>
<feature type="domain" description="tr-type G">
    <location>
        <begin position="222"/>
        <end position="391"/>
    </location>
</feature>
<feature type="region of interest" description="Disordered" evidence="3">
    <location>
        <begin position="48"/>
        <end position="138"/>
    </location>
</feature>
<feature type="region of interest" description="G1" evidence="1">
    <location>
        <begin position="231"/>
        <end position="238"/>
    </location>
</feature>
<feature type="region of interest" description="G2" evidence="1">
    <location>
        <begin position="256"/>
        <end position="260"/>
    </location>
</feature>
<feature type="region of interest" description="G3" evidence="1">
    <location>
        <begin position="277"/>
        <end position="280"/>
    </location>
</feature>
<feature type="region of interest" description="G4" evidence="1">
    <location>
        <begin position="331"/>
        <end position="334"/>
    </location>
</feature>
<feature type="region of interest" description="G5" evidence="1">
    <location>
        <begin position="367"/>
        <end position="369"/>
    </location>
</feature>
<feature type="compositionally biased region" description="Low complexity" evidence="3">
    <location>
        <begin position="60"/>
        <end position="75"/>
    </location>
</feature>
<feature type="compositionally biased region" description="Low complexity" evidence="3">
    <location>
        <begin position="99"/>
        <end position="113"/>
    </location>
</feature>
<feature type="compositionally biased region" description="Basic residues" evidence="3">
    <location>
        <begin position="114"/>
        <end position="123"/>
    </location>
</feature>
<feature type="binding site" evidence="2">
    <location>
        <begin position="231"/>
        <end position="238"/>
    </location>
    <ligand>
        <name>GTP</name>
        <dbReference type="ChEBI" id="CHEBI:37565"/>
    </ligand>
</feature>
<feature type="binding site" evidence="2">
    <location>
        <begin position="277"/>
        <end position="281"/>
    </location>
    <ligand>
        <name>GTP</name>
        <dbReference type="ChEBI" id="CHEBI:37565"/>
    </ligand>
</feature>
<feature type="binding site" evidence="2">
    <location>
        <begin position="331"/>
        <end position="334"/>
    </location>
    <ligand>
        <name>GTP</name>
        <dbReference type="ChEBI" id="CHEBI:37565"/>
    </ligand>
</feature>